<keyword id="KW-0002">3D-structure</keyword>
<keyword id="KW-0165">Cleavage on pair of basic residues</keyword>
<keyword id="KW-0903">Direct protein sequencing</keyword>
<keyword id="KW-1015">Disulfide bond</keyword>
<keyword id="KW-0873">Pyrrolidone carboxylic acid</keyword>
<keyword id="KW-0964">Secreted</keyword>
<keyword id="KW-0732">Signal</keyword>
<evidence type="ECO:0000255" key="1"/>
<evidence type="ECO:0000256" key="2">
    <source>
        <dbReference type="SAM" id="MobiDB-lite"/>
    </source>
</evidence>
<evidence type="ECO:0000269" key="3">
    <source>
    </source>
</evidence>
<evidence type="ECO:0000269" key="4">
    <source>
    </source>
</evidence>
<evidence type="ECO:0000303" key="5">
    <source>
    </source>
</evidence>
<evidence type="ECO:0000303" key="6">
    <source>
    </source>
</evidence>
<evidence type="ECO:0000305" key="7"/>
<evidence type="ECO:0000305" key="8">
    <source>
    </source>
</evidence>
<evidence type="ECO:0000305" key="9">
    <source>
    </source>
</evidence>
<evidence type="ECO:0000305" key="10">
    <source>
    </source>
</evidence>
<evidence type="ECO:0007744" key="11">
    <source>
        <dbReference type="PDB" id="2N24"/>
    </source>
</evidence>
<evidence type="ECO:0007744" key="12">
    <source>
        <dbReference type="PDB" id="5KKM"/>
    </source>
</evidence>
<evidence type="ECO:0007829" key="13">
    <source>
        <dbReference type="PDB" id="2N24"/>
    </source>
</evidence>
<sequence>MGKLTILFLVAAALLSTQVMVQGDGAHERTEAEEPQHHGAKRQDGTGGYPVDDVDMMQRIFRTPLKRQWCQPGYAYNPVLGICTITLSRIEHPGNYDYRRGRQ</sequence>
<protein>
    <recommendedName>
        <fullName evidence="5">O2 contryphan Vc1</fullName>
        <shortName evidence="5">O2_Vc1</shortName>
    </recommendedName>
    <alternativeName>
        <fullName evidence="6">Contryphan Vc1</fullName>
        <shortName evidence="6">Con-Vc1</shortName>
    </alternativeName>
</protein>
<comment type="function">
    <text evidence="3">Unknown. Intracranial injection of the peptide into mice does not produce toxic effects (PubMed:26774129). In addition, the peptide does not produce any observable changes to normal or depolarization-induced intracellular calcium levels in mouse dorsal root ganglion cells (PubMed:26774129).</text>
</comment>
<comment type="subcellular location">
    <subcellularLocation>
        <location evidence="3">Secreted</location>
    </subcellularLocation>
</comment>
<comment type="tissue specificity">
    <text evidence="8">Expressed by the venom gland.</text>
</comment>
<comment type="domain">
    <text evidence="9 10">Adopts the 'single disulfide-directed beta hairpin' (SDH) fold.</text>
</comment>
<comment type="domain">
    <text evidence="3 4">The secondary structural features of this peptide are highly resistant to thermal denaturation (PubMed:26774129). In addition, this peptide can be truncated (90-103 DEL) without loss of ordered structure (PubMed:28437072).</text>
</comment>
<comment type="domain">
    <text evidence="7">The cysteine framework is C-C.</text>
</comment>
<comment type="PTM">
    <text evidence="4">Pyrrolidone carboxylic acid at position 1 has no significant effect on the structure of contryphan-Vc1.</text>
</comment>
<comment type="similarity">
    <text evidence="7">Belongs to the O2 superfamily.</text>
</comment>
<reference key="1">
    <citation type="journal article" date="2014" name="PLoS ONE">
        <title>Diversity of conotoxin gene superfamilies in the venomous snail, Conus victoriae.</title>
        <authorList>
            <person name="Robinson S.D."/>
            <person name="Safavi-Hemami H."/>
            <person name="McIntosh L.D."/>
            <person name="Purcell A.W."/>
            <person name="Norton R.S."/>
            <person name="Papenfuss A.T."/>
        </authorList>
    </citation>
    <scope>NUCLEOTIDE SEQUENCE [MRNA]</scope>
    <source>
        <tissue>Venom gland</tissue>
    </source>
</reference>
<reference key="2">
    <citation type="journal article" date="2016" name="Structure">
        <title>A naturally occurring peptide with an elementary single disulfide-directed beta-hairpin fold.</title>
        <authorList>
            <person name="Robinson S.D."/>
            <person name="Chhabra S."/>
            <person name="Belgi A."/>
            <person name="Chittoor B."/>
            <person name="Safavi-Hemami H."/>
            <person name="Robinson A.J."/>
            <person name="Papenfuss A.T."/>
            <person name="Purcell A.W."/>
            <person name="Norton R.S."/>
        </authorList>
    </citation>
    <scope>PROTEIN SEQUENCE OF 68-98</scope>
    <scope>IDENTIFICATION BY MASS SPECTROMETRY</scope>
    <scope>SYNTHESIS OF 68-98</scope>
    <scope>STRUCTURE BY NMR OF 69-98</scope>
    <scope>PYROGLUTAMATE FORMATION AT GLN-68</scope>
    <scope>DISULFIDE BOND</scope>
    <scope>SUBCELLULAR LOCATION</scope>
    <source>
        <tissue>Venom</tissue>
    </source>
</reference>
<reference key="3">
    <citation type="journal article" date="2017" name="Biochemistry">
        <title>The single disulfide-directed beta-hairpin fold. dynamics, stability, and engineering.</title>
        <authorList>
            <person name="Chittoor B."/>
            <person name="Krishnarjuna B."/>
            <person name="Morales R.A.V."/>
            <person name="MacRaild C.A."/>
            <person name="Sadek M."/>
            <person name="Leung E.W.W."/>
            <person name="Robinson S.D."/>
            <person name="Pennington M.W."/>
            <person name="Norton R.S."/>
        </authorList>
    </citation>
    <scope>STRUCTURE BY NMR OF 68-89</scope>
    <scope>DISULFIDE BOND</scope>
</reference>
<organism>
    <name type="scientific">Conus victoriae</name>
    <name type="common">Queen Victoria cone</name>
    <dbReference type="NCBI Taxonomy" id="319920"/>
    <lineage>
        <taxon>Eukaryota</taxon>
        <taxon>Metazoa</taxon>
        <taxon>Spiralia</taxon>
        <taxon>Lophotrochozoa</taxon>
        <taxon>Mollusca</taxon>
        <taxon>Gastropoda</taxon>
        <taxon>Caenogastropoda</taxon>
        <taxon>Neogastropoda</taxon>
        <taxon>Conoidea</taxon>
        <taxon>Conidae</taxon>
        <taxon>Conus</taxon>
        <taxon>Cylinder</taxon>
    </lineage>
</organism>
<proteinExistence type="evidence at protein level"/>
<dbReference type="EMBL" id="GAIH01000059">
    <property type="protein sequence ID" value="JAB84658.1"/>
    <property type="molecule type" value="mRNA"/>
</dbReference>
<dbReference type="PDB" id="2N24">
    <property type="method" value="NMR"/>
    <property type="chains" value="A=68-98"/>
</dbReference>
<dbReference type="PDB" id="5KKM">
    <property type="method" value="NMR"/>
    <property type="chains" value="A=68-89"/>
</dbReference>
<dbReference type="PDBsum" id="2N24"/>
<dbReference type="PDBsum" id="5KKM"/>
<dbReference type="BMRB" id="W4VSF6"/>
<dbReference type="SMR" id="W4VSF6"/>
<dbReference type="EvolutionaryTrace" id="W4VSF6"/>
<dbReference type="GO" id="GO:0005576">
    <property type="term" value="C:extracellular region"/>
    <property type="evidence" value="ECO:0007669"/>
    <property type="project" value="UniProtKB-SubCell"/>
</dbReference>
<name>O2VC1_CONVC</name>
<feature type="signal peptide" evidence="1">
    <location>
        <begin position="1"/>
        <end position="23"/>
    </location>
</feature>
<feature type="propeptide" id="PRO_0000445679" evidence="9">
    <location>
        <begin position="24"/>
        <end position="67"/>
    </location>
</feature>
<feature type="peptide" id="PRO_5004852236" description="O2 contryphan Vc1" evidence="3">
    <location>
        <begin position="68"/>
        <end position="98"/>
    </location>
</feature>
<feature type="propeptide" id="PRO_0000445680" evidence="9">
    <location>
        <begin position="99"/>
        <end position="103"/>
    </location>
</feature>
<feature type="region of interest" description="Disordered" evidence="2">
    <location>
        <begin position="25"/>
        <end position="50"/>
    </location>
</feature>
<feature type="compositionally biased region" description="Basic and acidic residues" evidence="2">
    <location>
        <begin position="25"/>
        <end position="44"/>
    </location>
</feature>
<feature type="modified residue" description="Pyrrolidone carboxylic acid" evidence="3">
    <location>
        <position position="68"/>
    </location>
</feature>
<feature type="disulfide bond" evidence="4 11 12">
    <location>
        <begin position="70"/>
        <end position="83"/>
    </location>
</feature>
<feature type="strand" evidence="13">
    <location>
        <begin position="74"/>
        <end position="76"/>
    </location>
</feature>
<feature type="turn" evidence="13">
    <location>
        <begin position="78"/>
        <end position="80"/>
    </location>
</feature>
<feature type="strand" evidence="13">
    <location>
        <begin position="81"/>
        <end position="85"/>
    </location>
</feature>
<feature type="helix" evidence="13">
    <location>
        <begin position="87"/>
        <end position="90"/>
    </location>
</feature>
<feature type="turn" evidence="13">
    <location>
        <begin position="93"/>
        <end position="96"/>
    </location>
</feature>
<accession>W4VSF6</accession>